<accession>P38325</accession>
<accession>D6VQM5</accession>
<gene>
    <name type="primary">OM14</name>
    <name type="ordered locus">YBR230C</name>
    <name type="ORF">YBR1527</name>
</gene>
<keyword id="KW-0903">Direct protein sequencing</keyword>
<keyword id="KW-0472">Membrane</keyword>
<keyword id="KW-0496">Mitochondrion</keyword>
<keyword id="KW-1000">Mitochondrion outer membrane</keyword>
<keyword id="KW-0597">Phosphoprotein</keyword>
<keyword id="KW-1185">Reference proteome</keyword>
<keyword id="KW-0812">Transmembrane</keyword>
<keyword id="KW-1133">Transmembrane helix</keyword>
<organism>
    <name type="scientific">Saccharomyces cerevisiae (strain ATCC 204508 / S288c)</name>
    <name type="common">Baker's yeast</name>
    <dbReference type="NCBI Taxonomy" id="559292"/>
    <lineage>
        <taxon>Eukaryota</taxon>
        <taxon>Fungi</taxon>
        <taxon>Dikarya</taxon>
        <taxon>Ascomycota</taxon>
        <taxon>Saccharomycotina</taxon>
        <taxon>Saccharomycetes</taxon>
        <taxon>Saccharomycetales</taxon>
        <taxon>Saccharomycetaceae</taxon>
        <taxon>Saccharomyces</taxon>
    </lineage>
</organism>
<dbReference type="EMBL" id="Z36099">
    <property type="protein sequence ID" value="CAA85193.1"/>
    <property type="molecule type" value="Genomic_DNA"/>
</dbReference>
<dbReference type="EMBL" id="BK006936">
    <property type="protein sequence ID" value="DAA07345.1"/>
    <property type="molecule type" value="Genomic_DNA"/>
</dbReference>
<dbReference type="PIR" id="S46106">
    <property type="entry name" value="S46106"/>
</dbReference>
<dbReference type="RefSeq" id="NP_009789.1">
    <property type="nucleotide sequence ID" value="NM_001178578.1"/>
</dbReference>
<dbReference type="BioGRID" id="32925">
    <property type="interactions" value="107"/>
</dbReference>
<dbReference type="DIP" id="DIP-4946N"/>
<dbReference type="FunCoup" id="P38325">
    <property type="interactions" value="172"/>
</dbReference>
<dbReference type="IntAct" id="P38325">
    <property type="interactions" value="6"/>
</dbReference>
<dbReference type="STRING" id="4932.YBR230C"/>
<dbReference type="TCDB" id="9.B.235.1.1">
    <property type="family name" value="the mitochondrial outer membrane protein-14 (om14) family"/>
</dbReference>
<dbReference type="iPTMnet" id="P38325"/>
<dbReference type="PaxDb" id="4932-YBR230C"/>
<dbReference type="PeptideAtlas" id="P38325"/>
<dbReference type="EnsemblFungi" id="YBR230C_mRNA">
    <property type="protein sequence ID" value="YBR230C"/>
    <property type="gene ID" value="YBR230C"/>
</dbReference>
<dbReference type="GeneID" id="852531"/>
<dbReference type="KEGG" id="sce:YBR230C"/>
<dbReference type="AGR" id="SGD:S000000434"/>
<dbReference type="SGD" id="S000000434">
    <property type="gene designation" value="OM14"/>
</dbReference>
<dbReference type="VEuPathDB" id="FungiDB:YBR230C"/>
<dbReference type="eggNOG" id="ENOG502S89U">
    <property type="taxonomic scope" value="Eukaryota"/>
</dbReference>
<dbReference type="HOGENOM" id="CLU_156741_0_0_1"/>
<dbReference type="InParanoid" id="P38325"/>
<dbReference type="OMA" id="YANHNAR"/>
<dbReference type="OrthoDB" id="4064966at2759"/>
<dbReference type="BioCyc" id="YEAST:G3O-29162-MONOMER"/>
<dbReference type="BioGRID-ORCS" id="852531">
    <property type="hits" value="7 hits in 10 CRISPR screens"/>
</dbReference>
<dbReference type="PRO" id="PR:P38325"/>
<dbReference type="Proteomes" id="UP000002311">
    <property type="component" value="Chromosome II"/>
</dbReference>
<dbReference type="RNAct" id="P38325">
    <property type="molecule type" value="protein"/>
</dbReference>
<dbReference type="GO" id="GO:0044289">
    <property type="term" value="C:mitochondrial inner-outer membrane contact site"/>
    <property type="evidence" value="ECO:0000353"/>
    <property type="project" value="SGD"/>
</dbReference>
<dbReference type="GO" id="GO:0005741">
    <property type="term" value="C:mitochondrial outer membrane"/>
    <property type="evidence" value="ECO:0000314"/>
    <property type="project" value="SGD"/>
</dbReference>
<dbReference type="GO" id="GO:0005739">
    <property type="term" value="C:mitochondrion"/>
    <property type="evidence" value="ECO:0007005"/>
    <property type="project" value="SGD"/>
</dbReference>
<dbReference type="GO" id="GO:1990593">
    <property type="term" value="F:nascent polypeptide-associated complex binding"/>
    <property type="evidence" value="ECO:0000314"/>
    <property type="project" value="SGD"/>
</dbReference>
<dbReference type="GO" id="GO:0006626">
    <property type="term" value="P:protein targeting to mitochondrion"/>
    <property type="evidence" value="ECO:0000315"/>
    <property type="project" value="SGD"/>
</dbReference>
<dbReference type="GO" id="GO:0033750">
    <property type="term" value="P:ribosome localization"/>
    <property type="evidence" value="ECO:0000315"/>
    <property type="project" value="SGD"/>
</dbReference>
<dbReference type="InterPro" id="IPR039454">
    <property type="entry name" value="OM14"/>
</dbReference>
<dbReference type="InterPro" id="IPR039453">
    <property type="entry name" value="OM14_C"/>
</dbReference>
<dbReference type="PANTHER" id="PTHR38402">
    <property type="entry name" value="MITOCHONDRIAL OUTER MEMBRANE PROTEIN OM14"/>
    <property type="match status" value="1"/>
</dbReference>
<dbReference type="PANTHER" id="PTHR38402:SF1">
    <property type="entry name" value="MITOCHONDRIAL OUTER MEMBRANE PROTEIN OM14"/>
    <property type="match status" value="1"/>
</dbReference>
<dbReference type="Pfam" id="PF17304">
    <property type="entry name" value="OM14_C"/>
    <property type="match status" value="1"/>
</dbReference>
<sequence>MSATAKHDSNASPNSDSEDGHHHNNKKECAIEYLKARLNSASAVACGYLQAFVSKTQDFAKVCFLELQNPVVLVNLLLHSSVVCYLCNGYANHNARFLKGKPNSTVLATTAGALGLLTLDGIISKKYYSRYDKK</sequence>
<comment type="subcellular location">
    <subcellularLocation>
        <location evidence="3 5 6">Mitochondrion outer membrane</location>
        <topology evidence="3 5 6">Multi-pass membrane protein</topology>
    </subcellularLocation>
</comment>
<comment type="miscellaneous">
    <text evidence="4">Present with 4750 molecules/cell in log phase SD medium.</text>
</comment>
<name>OM14_YEAST</name>
<evidence type="ECO:0000255" key="1"/>
<evidence type="ECO:0000256" key="2">
    <source>
        <dbReference type="SAM" id="MobiDB-lite"/>
    </source>
</evidence>
<evidence type="ECO:0000269" key="3">
    <source>
    </source>
</evidence>
<evidence type="ECO:0000269" key="4">
    <source>
    </source>
</evidence>
<evidence type="ECO:0000269" key="5">
    <source>
    </source>
</evidence>
<evidence type="ECO:0000269" key="6">
    <source>
    </source>
</evidence>
<evidence type="ECO:0007744" key="7">
    <source>
    </source>
</evidence>
<proteinExistence type="evidence at protein level"/>
<protein>
    <recommendedName>
        <fullName>Mitochondrial outer membrane protein OM14</fullName>
    </recommendedName>
    <alternativeName>
        <fullName>Outer membrane protein of 14 kDa</fullName>
    </alternativeName>
</protein>
<reference key="1">
    <citation type="journal article" date="1994" name="EMBO J.">
        <title>Complete DNA sequence of yeast chromosome II.</title>
        <authorList>
            <person name="Feldmann H."/>
            <person name="Aigle M."/>
            <person name="Aljinovic G."/>
            <person name="Andre B."/>
            <person name="Baclet M.C."/>
            <person name="Barthe C."/>
            <person name="Baur A."/>
            <person name="Becam A.-M."/>
            <person name="Biteau N."/>
            <person name="Boles E."/>
            <person name="Brandt T."/>
            <person name="Brendel M."/>
            <person name="Brueckner M."/>
            <person name="Bussereau F."/>
            <person name="Christiansen C."/>
            <person name="Contreras R."/>
            <person name="Crouzet M."/>
            <person name="Cziepluch C."/>
            <person name="Demolis N."/>
            <person name="Delaveau T."/>
            <person name="Doignon F."/>
            <person name="Domdey H."/>
            <person name="Duesterhus S."/>
            <person name="Dubois E."/>
            <person name="Dujon B."/>
            <person name="El Bakkoury M."/>
            <person name="Entian K.-D."/>
            <person name="Feuermann M."/>
            <person name="Fiers W."/>
            <person name="Fobo G.M."/>
            <person name="Fritz C."/>
            <person name="Gassenhuber J."/>
            <person name="Glansdorff N."/>
            <person name="Goffeau A."/>
            <person name="Grivell L.A."/>
            <person name="de Haan M."/>
            <person name="Hein C."/>
            <person name="Herbert C.J."/>
            <person name="Hollenberg C.P."/>
            <person name="Holmstroem K."/>
            <person name="Jacq C."/>
            <person name="Jacquet M."/>
            <person name="Jauniaux J.-C."/>
            <person name="Jonniaux J.-L."/>
            <person name="Kallesoee T."/>
            <person name="Kiesau P."/>
            <person name="Kirchrath L."/>
            <person name="Koetter P."/>
            <person name="Korol S."/>
            <person name="Liebl S."/>
            <person name="Logghe M."/>
            <person name="Lohan A.J.E."/>
            <person name="Louis E.J."/>
            <person name="Li Z.Y."/>
            <person name="Maat M.J."/>
            <person name="Mallet L."/>
            <person name="Mannhaupt G."/>
            <person name="Messenguy F."/>
            <person name="Miosga T."/>
            <person name="Molemans F."/>
            <person name="Mueller S."/>
            <person name="Nasr F."/>
            <person name="Obermaier B."/>
            <person name="Perea J."/>
            <person name="Pierard A."/>
            <person name="Piravandi E."/>
            <person name="Pohl F.M."/>
            <person name="Pohl T.M."/>
            <person name="Potier S."/>
            <person name="Proft M."/>
            <person name="Purnelle B."/>
            <person name="Ramezani Rad M."/>
            <person name="Rieger M."/>
            <person name="Rose M."/>
            <person name="Schaaff-Gerstenschlaeger I."/>
            <person name="Scherens B."/>
            <person name="Schwarzlose C."/>
            <person name="Skala J."/>
            <person name="Slonimski P.P."/>
            <person name="Smits P.H.M."/>
            <person name="Souciet J.-L."/>
            <person name="Steensma H.Y."/>
            <person name="Stucka R."/>
            <person name="Urrestarazu L.A."/>
            <person name="van der Aart Q.J.M."/>
            <person name="Van Dyck L."/>
            <person name="Vassarotti A."/>
            <person name="Vetter I."/>
            <person name="Vierendeels F."/>
            <person name="Vissers S."/>
            <person name="Wagner G."/>
            <person name="de Wergifosse P."/>
            <person name="Wolfe K.H."/>
            <person name="Zagulski M."/>
            <person name="Zimmermann F.K."/>
            <person name="Mewes H.-W."/>
            <person name="Kleine K."/>
        </authorList>
    </citation>
    <scope>NUCLEOTIDE SEQUENCE [LARGE SCALE GENOMIC DNA]</scope>
    <source>
        <strain>ATCC 204508 / S288c</strain>
    </source>
</reference>
<reference key="2">
    <citation type="journal article" date="2014" name="G3 (Bethesda)">
        <title>The reference genome sequence of Saccharomyces cerevisiae: Then and now.</title>
        <authorList>
            <person name="Engel S.R."/>
            <person name="Dietrich F.S."/>
            <person name="Fisk D.G."/>
            <person name="Binkley G."/>
            <person name="Balakrishnan R."/>
            <person name="Costanzo M.C."/>
            <person name="Dwight S.S."/>
            <person name="Hitz B.C."/>
            <person name="Karra K."/>
            <person name="Nash R.S."/>
            <person name="Weng S."/>
            <person name="Wong E.D."/>
            <person name="Lloyd P."/>
            <person name="Skrzypek M.S."/>
            <person name="Miyasato S.R."/>
            <person name="Simison M."/>
            <person name="Cherry J.M."/>
        </authorList>
    </citation>
    <scope>GENOME REANNOTATION</scope>
    <source>
        <strain>ATCC 204508 / S288c</strain>
    </source>
</reference>
<reference key="3">
    <citation type="journal article" date="2006" name="FEBS J.">
        <title>Integral membrane proteins in the mitochondrial outer membrane of Saccharomyces cerevisiae.</title>
        <authorList>
            <person name="Burri L."/>
            <person name="Vascotto K."/>
            <person name="Gentle I.E."/>
            <person name="Chan N.C."/>
            <person name="Beilharz T."/>
            <person name="Stapleton D.I."/>
            <person name="Ramage L."/>
            <person name="Lithgow T."/>
        </authorList>
    </citation>
    <scope>PROTEIN SEQUENCE OF 1-12</scope>
    <scope>SUBCELLULAR LOCATION</scope>
</reference>
<reference key="4">
    <citation type="journal article" date="2003" name="Nature">
        <title>Global analysis of protein localization in budding yeast.</title>
        <authorList>
            <person name="Huh W.-K."/>
            <person name="Falvo J.V."/>
            <person name="Gerke L.C."/>
            <person name="Carroll A.S."/>
            <person name="Howson R.W."/>
            <person name="Weissman J.S."/>
            <person name="O'Shea E.K."/>
        </authorList>
    </citation>
    <scope>SUBCELLULAR LOCATION [LARGE SCALE ANALYSIS]</scope>
</reference>
<reference key="5">
    <citation type="journal article" date="2003" name="Nature">
        <title>Global analysis of protein expression in yeast.</title>
        <authorList>
            <person name="Ghaemmaghami S."/>
            <person name="Huh W.-K."/>
            <person name="Bower K."/>
            <person name="Howson R.W."/>
            <person name="Belle A."/>
            <person name="Dephoure N."/>
            <person name="O'Shea E.K."/>
            <person name="Weissman J.S."/>
        </authorList>
    </citation>
    <scope>LEVEL OF PROTEIN EXPRESSION [LARGE SCALE ANALYSIS]</scope>
</reference>
<reference key="6">
    <citation type="journal article" date="2003" name="Proc. Natl. Acad. Sci. U.S.A.">
        <title>The proteome of Saccharomyces cerevisiae mitochondria.</title>
        <authorList>
            <person name="Sickmann A."/>
            <person name="Reinders J."/>
            <person name="Wagner Y."/>
            <person name="Joppich C."/>
            <person name="Zahedi R.P."/>
            <person name="Meyer H.E."/>
            <person name="Schoenfisch B."/>
            <person name="Perschil I."/>
            <person name="Chacinska A."/>
            <person name="Guiard B."/>
            <person name="Rehling P."/>
            <person name="Pfanner N."/>
            <person name="Meisinger C."/>
        </authorList>
    </citation>
    <scope>SUBCELLULAR LOCATION [LARGE SCALE ANALYSIS]</scope>
    <source>
        <strain>ATCC 76625 / YPH499</strain>
    </source>
</reference>
<reference key="7">
    <citation type="journal article" date="2007" name="Proc. Natl. Acad. Sci. U.S.A.">
        <title>Analysis of phosphorylation sites on proteins from Saccharomyces cerevisiae by electron transfer dissociation (ETD) mass spectrometry.</title>
        <authorList>
            <person name="Chi A."/>
            <person name="Huttenhower C."/>
            <person name="Geer L.Y."/>
            <person name="Coon J.J."/>
            <person name="Syka J.E.P."/>
            <person name="Bai D.L."/>
            <person name="Shabanowitz J."/>
            <person name="Burke D.J."/>
            <person name="Troyanskaya O.G."/>
            <person name="Hunt D.F."/>
        </authorList>
    </citation>
    <scope>PHOSPHORYLATION [LARGE SCALE ANALYSIS] AT SER-12 AND SER-15</scope>
    <scope>IDENTIFICATION BY MASS SPECTROMETRY [LARGE SCALE ANALYSIS]</scope>
</reference>
<feature type="chain" id="PRO_0000202518" description="Mitochondrial outer membrane protein OM14">
    <location>
        <begin position="1"/>
        <end position="134"/>
    </location>
</feature>
<feature type="transmembrane region" description="Helical" evidence="1">
    <location>
        <begin position="71"/>
        <end position="87"/>
    </location>
</feature>
<feature type="transmembrane region" description="Helical" evidence="1">
    <location>
        <begin position="105"/>
        <end position="123"/>
    </location>
</feature>
<feature type="region of interest" description="Disordered" evidence="2">
    <location>
        <begin position="1"/>
        <end position="23"/>
    </location>
</feature>
<feature type="modified residue" description="Phosphoserine" evidence="7">
    <location>
        <position position="12"/>
    </location>
</feature>
<feature type="modified residue" description="Phosphoserine" evidence="7">
    <location>
        <position position="15"/>
    </location>
</feature>